<protein>
    <recommendedName>
        <fullName evidence="1">Secretion monitor</fullName>
    </recommendedName>
</protein>
<gene>
    <name evidence="1" type="primary">secM</name>
    <name type="ordered locus">ECP_0099</name>
</gene>
<evidence type="ECO:0000255" key="1">
    <source>
        <dbReference type="HAMAP-Rule" id="MF_01332"/>
    </source>
</evidence>
<proteinExistence type="inferred from homology"/>
<dbReference type="EMBL" id="CP000247">
    <property type="protein sequence ID" value="ABG68139.1"/>
    <property type="molecule type" value="Genomic_DNA"/>
</dbReference>
<dbReference type="RefSeq" id="WP_000014320.1">
    <property type="nucleotide sequence ID" value="NC_008253.1"/>
</dbReference>
<dbReference type="SMR" id="Q0TLP2"/>
<dbReference type="GeneID" id="75169997"/>
<dbReference type="KEGG" id="ecp:ECP_0099"/>
<dbReference type="HOGENOM" id="CLU_108853_0_0_6"/>
<dbReference type="Proteomes" id="UP000009182">
    <property type="component" value="Chromosome"/>
</dbReference>
<dbReference type="GO" id="GO:0005829">
    <property type="term" value="C:cytosol"/>
    <property type="evidence" value="ECO:0007669"/>
    <property type="project" value="UniProtKB-SubCell"/>
</dbReference>
<dbReference type="GO" id="GO:0042597">
    <property type="term" value="C:periplasmic space"/>
    <property type="evidence" value="ECO:0007669"/>
    <property type="project" value="UniProtKB-SubCell"/>
</dbReference>
<dbReference type="GO" id="GO:0045182">
    <property type="term" value="F:translation regulator activity"/>
    <property type="evidence" value="ECO:0007669"/>
    <property type="project" value="InterPro"/>
</dbReference>
<dbReference type="HAMAP" id="MF_01332">
    <property type="entry name" value="SecM"/>
    <property type="match status" value="1"/>
</dbReference>
<dbReference type="InterPro" id="IPR009502">
    <property type="entry name" value="SecM"/>
</dbReference>
<dbReference type="NCBIfam" id="NF002799">
    <property type="entry name" value="PRK02943.1-1"/>
    <property type="match status" value="1"/>
</dbReference>
<dbReference type="Pfam" id="PF06558">
    <property type="entry name" value="SecM"/>
    <property type="match status" value="1"/>
</dbReference>
<dbReference type="PIRSF" id="PIRSF004572">
    <property type="entry name" value="SecM"/>
    <property type="match status" value="1"/>
</dbReference>
<organism>
    <name type="scientific">Escherichia coli O6:K15:H31 (strain 536 / UPEC)</name>
    <dbReference type="NCBI Taxonomy" id="362663"/>
    <lineage>
        <taxon>Bacteria</taxon>
        <taxon>Pseudomonadati</taxon>
        <taxon>Pseudomonadota</taxon>
        <taxon>Gammaproteobacteria</taxon>
        <taxon>Enterobacterales</taxon>
        <taxon>Enterobacteriaceae</taxon>
        <taxon>Escherichia</taxon>
    </lineage>
</organism>
<accession>Q0TLP2</accession>
<keyword id="KW-0963">Cytoplasm</keyword>
<keyword id="KW-0574">Periplasm</keyword>
<keyword id="KW-0732">Signal</keyword>
<comment type="function">
    <text evidence="1">Regulates secA expression by translational coupling of the secM secA operon. Translational pausing at a specific Pro residue 5 residues before the end of the protein may allow disruption of a mRNA repressor helix that normally suppresses secA translation initiation.</text>
</comment>
<comment type="subcellular location">
    <subcellularLocation>
        <location evidence="1">Cytoplasm</location>
        <location evidence="1">Cytosol</location>
    </subcellularLocation>
    <subcellularLocation>
        <location evidence="1">Periplasm</location>
    </subcellularLocation>
    <text evidence="1">The active form is cytosolic, while the periplasmic form is rapidly degraded, mainly by the tail-specific protease.</text>
</comment>
<comment type="similarity">
    <text evidence="1">Belongs to the SecM family.</text>
</comment>
<name>SECM_ECOL5</name>
<reference key="1">
    <citation type="journal article" date="2006" name="Mol. Microbiol.">
        <title>Role of pathogenicity island-associated integrases in the genome plasticity of uropathogenic Escherichia coli strain 536.</title>
        <authorList>
            <person name="Hochhut B."/>
            <person name="Wilde C."/>
            <person name="Balling G."/>
            <person name="Middendorf B."/>
            <person name="Dobrindt U."/>
            <person name="Brzuszkiewicz E."/>
            <person name="Gottschalk G."/>
            <person name="Carniel E."/>
            <person name="Hacker J."/>
        </authorList>
    </citation>
    <scope>NUCLEOTIDE SEQUENCE [LARGE SCALE GENOMIC DNA]</scope>
    <source>
        <strain>536 / UPEC</strain>
    </source>
</reference>
<feature type="signal peptide" evidence="1">
    <location>
        <begin position="1"/>
        <end position="37"/>
    </location>
</feature>
<feature type="chain" id="PRO_0000314446" description="Secretion monitor">
    <location>
        <begin position="38"/>
        <end position="170"/>
    </location>
</feature>
<sequence>MSGILTRWRQFGKRYFWPHLLLGMVAASLGLPALSNAAEPNAPAKATTRNHEPSAKVNFGQLALLEANTRRPNSNYSVDYWHQHAIRTVIRHLSFAMAPQTLPVAEESLPLQAQHLALLDTLSALLTQEGTPSEKGYRIDYAHFTPQAKFSTPVWISQAQGIRAGPQRLS</sequence>